<organism evidence="5">
    <name type="scientific">Caenorhabditis elegans</name>
    <dbReference type="NCBI Taxonomy" id="6239"/>
    <lineage>
        <taxon>Eukaryota</taxon>
        <taxon>Metazoa</taxon>
        <taxon>Ecdysozoa</taxon>
        <taxon>Nematoda</taxon>
        <taxon>Chromadorea</taxon>
        <taxon>Rhabditida</taxon>
        <taxon>Rhabditina</taxon>
        <taxon>Rhabditomorpha</taxon>
        <taxon>Rhabditoidea</taxon>
        <taxon>Rhabditidae</taxon>
        <taxon>Peloderinae</taxon>
        <taxon>Caenorhabditis</taxon>
    </lineage>
</organism>
<reference evidence="5" key="1">
    <citation type="journal article" date="1998" name="Science">
        <title>Genome sequence of the nematode C. elegans: a platform for investigating biology.</title>
        <authorList>
            <consortium name="The C. elegans sequencing consortium"/>
        </authorList>
    </citation>
    <scope>NUCLEOTIDE SEQUENCE [LARGE SCALE GENOMIC DNA]</scope>
    <source>
        <strain evidence="5">Bristol N2</strain>
    </source>
</reference>
<reference evidence="4" key="2">
    <citation type="journal article" date="2013" name="Curr. Biol.">
        <title>Neuropeptide secreted from a pacemaker activates neurons to control a rhythmic behavior.</title>
        <authorList>
            <person name="Wang H."/>
            <person name="Girskis K."/>
            <person name="Janssen T."/>
            <person name="Chan J.P."/>
            <person name="Dasgupta K."/>
            <person name="Knowles J.A."/>
            <person name="Schoofs L."/>
            <person name="Sieburth D."/>
        </authorList>
    </citation>
    <scope>FUNCTION</scope>
    <scope>SUBCELLULAR LOCATION</scope>
    <scope>TISSUE SPECIFICITY</scope>
    <scope>DISRUPTION PHENOTYPE</scope>
    <scope>MUTAGENESIS OF ASP-247 AND ASP-253</scope>
</reference>
<comment type="function">
    <text evidence="3">Ca(2+) sensor involved in Ca(2+)-dependent secretion of the nlp-40 neuropeptide from intestinal cells. Involved in the defecation motor program, which is a coordinated series of three muscle contractions that occurs every 45 seconds.</text>
</comment>
<comment type="cofactor">
    <cofactor evidence="2">
        <name>Ca(2+)</name>
        <dbReference type="ChEBI" id="CHEBI:29108"/>
    </cofactor>
    <text evidence="1 2">Binds 3 Ca(2+) ions per C2 domain.</text>
</comment>
<comment type="subcellular location">
    <subcellularLocation>
        <location evidence="3">Cytoplasmic vesicle</location>
    </subcellularLocation>
    <text evidence="3">Co-localizes with nlp-40 in cytoplasmic vesicles.</text>
</comment>
<comment type="tissue specificity">
    <text evidence="3">Expressed throughout the intestine and in several neurons in the head and tail.</text>
</comment>
<comment type="disruption phenotype">
    <text evidence="3">Defecation abnormalities.</text>
</comment>
<comment type="similarity">
    <text evidence="4">Belongs to the synaptotagmin family.</text>
</comment>
<name>SYT2_CAEEL</name>
<sequence>MWATGAIVCSPVFRILSTCCPIRRGVPTSNGYHPRPKHVDIGNGAVPILSSKPITVQPTNSDYYEPVNNGTLPLSSSGALIKQYGNIHFRVEYDFEQSKLSVTIVSASDLPAMDRNGMSDPYVKVYVLPERKQKFETRIIRNTLNPTYNETFQFSIPFNELHSKTLMLVVYDYDRLSKDDKMGQLSVPLESIDFGITTDIERPLQKPEKDDEKECRLGDICFSTRYRPATGTVTLTIMEARNLKKMDVGGSSDPYVKIYLHHGRKLLSKKKTSRKYKTLNPYYNESFQFKIEPHMIEKVHLIVSVWDYDKMSKNDFIGEVTLGSKHLNLPQITHACSEQWAEMMTSRRPVVQWHTLQERMEKEKKKDDD</sequence>
<keyword id="KW-0106">Calcium</keyword>
<keyword id="KW-0968">Cytoplasmic vesicle</keyword>
<keyword id="KW-0268">Exocytosis</keyword>
<keyword id="KW-0479">Metal-binding</keyword>
<keyword id="KW-1185">Reference proteome</keyword>
<keyword id="KW-0677">Repeat</keyword>
<accession>K8FE10</accession>
<evidence type="ECO:0000250" key="1">
    <source>
        <dbReference type="UniProtKB" id="Q9R0N7"/>
    </source>
</evidence>
<evidence type="ECO:0000255" key="2">
    <source>
        <dbReference type="PROSITE-ProRule" id="PRU00041"/>
    </source>
</evidence>
<evidence type="ECO:0000269" key="3">
    <source>
    </source>
</evidence>
<evidence type="ECO:0000305" key="4"/>
<evidence type="ECO:0000312" key="5">
    <source>
        <dbReference type="Proteomes" id="UP000001940"/>
    </source>
</evidence>
<evidence type="ECO:0000312" key="6">
    <source>
        <dbReference type="WormBase" id="F42G9.7"/>
    </source>
</evidence>
<feature type="chain" id="PRO_0000438195" description="Synaptotagmin 2" evidence="4">
    <location>
        <begin position="1"/>
        <end position="369"/>
    </location>
</feature>
<feature type="domain" description="C2 1" evidence="2">
    <location>
        <begin position="83"/>
        <end position="204"/>
    </location>
</feature>
<feature type="domain" description="C2 2" evidence="2">
    <location>
        <begin position="216"/>
        <end position="354"/>
    </location>
</feature>
<feature type="binding site" evidence="2">
    <location>
        <position position="114"/>
    </location>
    <ligand>
        <name>Ca(2+)</name>
        <dbReference type="ChEBI" id="CHEBI:29108"/>
        <label>1</label>
    </ligand>
</feature>
<feature type="binding site" evidence="2">
    <location>
        <position position="114"/>
    </location>
    <ligand>
        <name>Ca(2+)</name>
        <dbReference type="ChEBI" id="CHEBI:29108"/>
        <label>2</label>
    </ligand>
</feature>
<feature type="binding site" evidence="2">
    <location>
        <position position="120"/>
    </location>
    <ligand>
        <name>Ca(2+)</name>
        <dbReference type="ChEBI" id="CHEBI:29108"/>
        <label>1</label>
    </ligand>
</feature>
<feature type="binding site" evidence="2">
    <location>
        <position position="172"/>
    </location>
    <ligand>
        <name>Ca(2+)</name>
        <dbReference type="ChEBI" id="CHEBI:29108"/>
        <label>1</label>
    </ligand>
</feature>
<feature type="binding site" evidence="2">
    <location>
        <position position="172"/>
    </location>
    <ligand>
        <name>Ca(2+)</name>
        <dbReference type="ChEBI" id="CHEBI:29108"/>
        <label>2</label>
    </ligand>
</feature>
<feature type="binding site" evidence="2">
    <location>
        <position position="174"/>
    </location>
    <ligand>
        <name>Ca(2+)</name>
        <dbReference type="ChEBI" id="CHEBI:29108"/>
        <label>1</label>
    </ligand>
</feature>
<feature type="binding site" evidence="2">
    <location>
        <position position="174"/>
    </location>
    <ligand>
        <name>Ca(2+)</name>
        <dbReference type="ChEBI" id="CHEBI:29108"/>
        <label>2</label>
    </ligand>
</feature>
<feature type="binding site" evidence="2">
    <location>
        <position position="174"/>
    </location>
    <ligand>
        <name>Ca(2+)</name>
        <dbReference type="ChEBI" id="CHEBI:29108"/>
        <label>3</label>
    </ligand>
</feature>
<feature type="binding site" evidence="2">
    <location>
        <position position="177"/>
    </location>
    <ligand>
        <name>Ca(2+)</name>
        <dbReference type="ChEBI" id="CHEBI:29108"/>
        <label>3</label>
    </ligand>
</feature>
<feature type="binding site" evidence="2">
    <location>
        <position position="178"/>
    </location>
    <ligand>
        <name>Ca(2+)</name>
        <dbReference type="ChEBI" id="CHEBI:29108"/>
        <label>3</label>
    </ligand>
</feature>
<feature type="binding site" evidence="2">
    <location>
        <position position="180"/>
    </location>
    <ligand>
        <name>Ca(2+)</name>
        <dbReference type="ChEBI" id="CHEBI:29108"/>
        <label>2</label>
    </ligand>
</feature>
<feature type="binding site" evidence="2">
    <location>
        <position position="180"/>
    </location>
    <ligand>
        <name>Ca(2+)</name>
        <dbReference type="ChEBI" id="CHEBI:29108"/>
        <label>3</label>
    </ligand>
</feature>
<feature type="binding site" evidence="2">
    <location>
        <position position="247"/>
    </location>
    <ligand>
        <name>Ca(2+)</name>
        <dbReference type="ChEBI" id="CHEBI:29108"/>
        <label>4</label>
    </ligand>
</feature>
<feature type="binding site" evidence="2">
    <location>
        <position position="247"/>
    </location>
    <ligand>
        <name>Ca(2+)</name>
        <dbReference type="ChEBI" id="CHEBI:29108"/>
        <label>5</label>
    </ligand>
</feature>
<feature type="binding site" evidence="2">
    <location>
        <position position="253"/>
    </location>
    <ligand>
        <name>Ca(2+)</name>
        <dbReference type="ChEBI" id="CHEBI:29108"/>
        <label>4</label>
    </ligand>
</feature>
<feature type="binding site" evidence="2">
    <location>
        <position position="307"/>
    </location>
    <ligand>
        <name>Ca(2+)</name>
        <dbReference type="ChEBI" id="CHEBI:29108"/>
        <label>4</label>
    </ligand>
</feature>
<feature type="binding site" evidence="2">
    <location>
        <position position="307"/>
    </location>
    <ligand>
        <name>Ca(2+)</name>
        <dbReference type="ChEBI" id="CHEBI:29108"/>
        <label>5</label>
    </ligand>
</feature>
<feature type="binding site" evidence="2">
    <location>
        <position position="309"/>
    </location>
    <ligand>
        <name>Ca(2+)</name>
        <dbReference type="ChEBI" id="CHEBI:29108"/>
        <label>4</label>
    </ligand>
</feature>
<feature type="binding site" evidence="2">
    <location>
        <position position="309"/>
    </location>
    <ligand>
        <name>Ca(2+)</name>
        <dbReference type="ChEBI" id="CHEBI:29108"/>
        <label>5</label>
    </ligand>
</feature>
<feature type="binding site" evidence="2">
    <location>
        <position position="309"/>
    </location>
    <ligand>
        <name>Ca(2+)</name>
        <dbReference type="ChEBI" id="CHEBI:29108"/>
        <label>6</label>
    </ligand>
</feature>
<feature type="binding site" evidence="2">
    <location>
        <position position="312"/>
    </location>
    <ligand>
        <name>Ca(2+)</name>
        <dbReference type="ChEBI" id="CHEBI:29108"/>
        <label>6</label>
    </ligand>
</feature>
<feature type="binding site" evidence="2">
    <location>
        <position position="313"/>
    </location>
    <ligand>
        <name>Ca(2+)</name>
        <dbReference type="ChEBI" id="CHEBI:29108"/>
        <label>6</label>
    </ligand>
</feature>
<feature type="binding site" evidence="2">
    <location>
        <position position="315"/>
    </location>
    <ligand>
        <name>Ca(2+)</name>
        <dbReference type="ChEBI" id="CHEBI:29108"/>
        <label>5</label>
    </ligand>
</feature>
<feature type="binding site" evidence="2">
    <location>
        <position position="315"/>
    </location>
    <ligand>
        <name>Ca(2+)</name>
        <dbReference type="ChEBI" id="CHEBI:29108"/>
        <label>6</label>
    </ligand>
</feature>
<feature type="mutagenesis site" description="Defecation defect; when associated with N-253." evidence="3">
    <original>D</original>
    <variation>N</variation>
    <location>
        <position position="247"/>
    </location>
</feature>
<feature type="mutagenesis site" description="Defecation defect; when associated with N-247." evidence="3">
    <original>D</original>
    <variation>N</variation>
    <location>
        <position position="253"/>
    </location>
</feature>
<protein>
    <recommendedName>
        <fullName evidence="6">Synaptotagmin 2</fullName>
    </recommendedName>
</protein>
<gene>
    <name evidence="6" type="primary">snt-2</name>
    <name evidence="6" type="ORF">F42G9.7</name>
</gene>
<proteinExistence type="evidence at protein level"/>
<dbReference type="EMBL" id="BX284603">
    <property type="protein sequence ID" value="CCO25912.1"/>
    <property type="molecule type" value="Genomic_DNA"/>
</dbReference>
<dbReference type="RefSeq" id="NP_497261.2">
    <property type="nucleotide sequence ID" value="NM_064860.6"/>
</dbReference>
<dbReference type="SMR" id="K8FE10"/>
<dbReference type="FunCoup" id="K8FE10">
    <property type="interactions" value="2"/>
</dbReference>
<dbReference type="IntAct" id="K8FE10">
    <property type="interactions" value="1"/>
</dbReference>
<dbReference type="STRING" id="6239.F42G9.7.1"/>
<dbReference type="PaxDb" id="6239-F42G9.7"/>
<dbReference type="EnsemblMetazoa" id="F42G9.7.1">
    <property type="protein sequence ID" value="F42G9.7.1"/>
    <property type="gene ID" value="WBGene00004922"/>
</dbReference>
<dbReference type="GeneID" id="185680"/>
<dbReference type="KEGG" id="cel:CELE_F42G9.7"/>
<dbReference type="AGR" id="WB:WBGene00004922"/>
<dbReference type="CTD" id="185680"/>
<dbReference type="WormBase" id="F42G9.7">
    <property type="protein sequence ID" value="CE37915"/>
    <property type="gene ID" value="WBGene00004922"/>
    <property type="gene designation" value="snt-2"/>
</dbReference>
<dbReference type="eggNOG" id="KOG1028">
    <property type="taxonomic scope" value="Eukaryota"/>
</dbReference>
<dbReference type="HOGENOM" id="CLU_023008_11_0_1"/>
<dbReference type="InParanoid" id="K8FE10"/>
<dbReference type="OMA" id="HWHTLQP"/>
<dbReference type="OrthoDB" id="67700at2759"/>
<dbReference type="PhylomeDB" id="K8FE10"/>
<dbReference type="Reactome" id="R-CEL-8856825">
    <property type="pathway name" value="Cargo recognition for clathrin-mediated endocytosis"/>
</dbReference>
<dbReference type="Reactome" id="R-CEL-8856828">
    <property type="pathway name" value="Clathrin-mediated endocytosis"/>
</dbReference>
<dbReference type="PRO" id="PR:K8FE10"/>
<dbReference type="Proteomes" id="UP000001940">
    <property type="component" value="Chromosome III"/>
</dbReference>
<dbReference type="Bgee" id="WBGene00004922">
    <property type="expression patterns" value="Expressed in adult organism and 4 other cell types or tissues"/>
</dbReference>
<dbReference type="GO" id="GO:0030424">
    <property type="term" value="C:axon"/>
    <property type="evidence" value="ECO:0000318"/>
    <property type="project" value="GO_Central"/>
</dbReference>
<dbReference type="GO" id="GO:0031045">
    <property type="term" value="C:dense core granule"/>
    <property type="evidence" value="ECO:0000314"/>
    <property type="project" value="WormBase"/>
</dbReference>
<dbReference type="GO" id="GO:0070382">
    <property type="term" value="C:exocytic vesicle"/>
    <property type="evidence" value="ECO:0000318"/>
    <property type="project" value="GO_Central"/>
</dbReference>
<dbReference type="GO" id="GO:0005886">
    <property type="term" value="C:plasma membrane"/>
    <property type="evidence" value="ECO:0000318"/>
    <property type="project" value="GO_Central"/>
</dbReference>
<dbReference type="GO" id="GO:0030672">
    <property type="term" value="C:synaptic vesicle membrane"/>
    <property type="evidence" value="ECO:0000318"/>
    <property type="project" value="GO_Central"/>
</dbReference>
<dbReference type="GO" id="GO:0061891">
    <property type="term" value="F:calcium ion sensor activity"/>
    <property type="evidence" value="ECO:0000318"/>
    <property type="project" value="GO_Central"/>
</dbReference>
<dbReference type="GO" id="GO:0005544">
    <property type="term" value="F:calcium-dependent phospholipid binding"/>
    <property type="evidence" value="ECO:0000318"/>
    <property type="project" value="GO_Central"/>
</dbReference>
<dbReference type="GO" id="GO:0046872">
    <property type="term" value="F:metal ion binding"/>
    <property type="evidence" value="ECO:0007669"/>
    <property type="project" value="UniProtKB-KW"/>
</dbReference>
<dbReference type="GO" id="GO:0000149">
    <property type="term" value="F:SNARE binding"/>
    <property type="evidence" value="ECO:0000318"/>
    <property type="project" value="GO_Central"/>
</dbReference>
<dbReference type="GO" id="GO:0099502">
    <property type="term" value="P:calcium-dependent activation of synaptic vesicle fusion"/>
    <property type="evidence" value="ECO:0000318"/>
    <property type="project" value="GO_Central"/>
</dbReference>
<dbReference type="GO" id="GO:0017158">
    <property type="term" value="P:regulation of calcium ion-dependent exocytosis"/>
    <property type="evidence" value="ECO:0000318"/>
    <property type="project" value="GO_Central"/>
</dbReference>
<dbReference type="GO" id="GO:2000300">
    <property type="term" value="P:regulation of synaptic vesicle exocytosis"/>
    <property type="evidence" value="ECO:0000318"/>
    <property type="project" value="GO_Central"/>
</dbReference>
<dbReference type="GO" id="GO:0016192">
    <property type="term" value="P:vesicle-mediated transport"/>
    <property type="evidence" value="ECO:0000318"/>
    <property type="project" value="GO_Central"/>
</dbReference>
<dbReference type="CDD" id="cd08402">
    <property type="entry name" value="C2B_Synaptotagmin-1"/>
    <property type="match status" value="1"/>
</dbReference>
<dbReference type="FunFam" id="2.60.40.150:FF:000380">
    <property type="entry name" value="Synaptotagmin 2"/>
    <property type="match status" value="1"/>
</dbReference>
<dbReference type="Gene3D" id="2.60.40.150">
    <property type="entry name" value="C2 domain"/>
    <property type="match status" value="2"/>
</dbReference>
<dbReference type="InterPro" id="IPR000008">
    <property type="entry name" value="C2_dom"/>
</dbReference>
<dbReference type="InterPro" id="IPR035892">
    <property type="entry name" value="C2_domain_sf"/>
</dbReference>
<dbReference type="InterPro" id="IPR001565">
    <property type="entry name" value="Synaptotagmin"/>
</dbReference>
<dbReference type="PANTHER" id="PTHR10024">
    <property type="entry name" value="SYNAPTOTAGMIN"/>
    <property type="match status" value="1"/>
</dbReference>
<dbReference type="PANTHER" id="PTHR10024:SF352">
    <property type="entry name" value="SYNAPTOTAGMIN 2"/>
    <property type="match status" value="1"/>
</dbReference>
<dbReference type="Pfam" id="PF00168">
    <property type="entry name" value="C2"/>
    <property type="match status" value="2"/>
</dbReference>
<dbReference type="PRINTS" id="PR00360">
    <property type="entry name" value="C2DOMAIN"/>
</dbReference>
<dbReference type="PRINTS" id="PR00399">
    <property type="entry name" value="SYNAPTOTAGMN"/>
</dbReference>
<dbReference type="SMART" id="SM00239">
    <property type="entry name" value="C2"/>
    <property type="match status" value="2"/>
</dbReference>
<dbReference type="SUPFAM" id="SSF49562">
    <property type="entry name" value="C2 domain (Calcium/lipid-binding domain, CaLB)"/>
    <property type="match status" value="2"/>
</dbReference>
<dbReference type="PROSITE" id="PS50004">
    <property type="entry name" value="C2"/>
    <property type="match status" value="2"/>
</dbReference>